<organism>
    <name type="scientific">Clostridium kluyveri (strain ATCC 8527 / DSM 555 / NBRC 12016 / NCIMB 10680 / K1)</name>
    <dbReference type="NCBI Taxonomy" id="431943"/>
    <lineage>
        <taxon>Bacteria</taxon>
        <taxon>Bacillati</taxon>
        <taxon>Bacillota</taxon>
        <taxon>Clostridia</taxon>
        <taxon>Eubacteriales</taxon>
        <taxon>Clostridiaceae</taxon>
        <taxon>Clostridium</taxon>
    </lineage>
</organism>
<protein>
    <recommendedName>
        <fullName evidence="1">Ribosome maturation factor RimP</fullName>
    </recommendedName>
</protein>
<name>RIMP_CLOK5</name>
<sequence>MSNHMLVERVLKLIKPIVDNLNFELYHLEFKREGNNNYLRIFIDKEEGNISLEDCEAVSRAVSDILDREDPIRDPYYLEVSSPGIERTLYTHEHLKRYIGFNVIVNIQGLLKGKKKYQGKLLSFDESVLRVSCEGEEIVIPKSKISTVNLKDDL</sequence>
<dbReference type="EMBL" id="CP000673">
    <property type="protein sequence ID" value="EDK33469.1"/>
    <property type="molecule type" value="Genomic_DNA"/>
</dbReference>
<dbReference type="RefSeq" id="WP_012101816.1">
    <property type="nucleotide sequence ID" value="NC_009706.1"/>
</dbReference>
<dbReference type="SMR" id="A5N838"/>
<dbReference type="STRING" id="431943.CKL_1427"/>
<dbReference type="KEGG" id="ckl:CKL_1427"/>
<dbReference type="eggNOG" id="COG0779">
    <property type="taxonomic scope" value="Bacteria"/>
</dbReference>
<dbReference type="HOGENOM" id="CLU_070525_2_2_9"/>
<dbReference type="Proteomes" id="UP000002411">
    <property type="component" value="Chromosome"/>
</dbReference>
<dbReference type="GO" id="GO:0005829">
    <property type="term" value="C:cytosol"/>
    <property type="evidence" value="ECO:0007669"/>
    <property type="project" value="TreeGrafter"/>
</dbReference>
<dbReference type="GO" id="GO:0000028">
    <property type="term" value="P:ribosomal small subunit assembly"/>
    <property type="evidence" value="ECO:0007669"/>
    <property type="project" value="TreeGrafter"/>
</dbReference>
<dbReference type="GO" id="GO:0006412">
    <property type="term" value="P:translation"/>
    <property type="evidence" value="ECO:0007669"/>
    <property type="project" value="TreeGrafter"/>
</dbReference>
<dbReference type="CDD" id="cd01734">
    <property type="entry name" value="YlxS_C"/>
    <property type="match status" value="1"/>
</dbReference>
<dbReference type="FunFam" id="3.30.300.70:FF:000001">
    <property type="entry name" value="Ribosome maturation factor RimP"/>
    <property type="match status" value="1"/>
</dbReference>
<dbReference type="Gene3D" id="2.30.30.180">
    <property type="entry name" value="Ribosome maturation factor RimP, C-terminal domain"/>
    <property type="match status" value="1"/>
</dbReference>
<dbReference type="Gene3D" id="3.30.300.70">
    <property type="entry name" value="RimP-like superfamily, N-terminal"/>
    <property type="match status" value="1"/>
</dbReference>
<dbReference type="HAMAP" id="MF_01077">
    <property type="entry name" value="RimP"/>
    <property type="match status" value="1"/>
</dbReference>
<dbReference type="InterPro" id="IPR003728">
    <property type="entry name" value="Ribosome_maturation_RimP"/>
</dbReference>
<dbReference type="InterPro" id="IPR028998">
    <property type="entry name" value="RimP_C"/>
</dbReference>
<dbReference type="InterPro" id="IPR036847">
    <property type="entry name" value="RimP_C_sf"/>
</dbReference>
<dbReference type="InterPro" id="IPR028989">
    <property type="entry name" value="RimP_N"/>
</dbReference>
<dbReference type="InterPro" id="IPR035956">
    <property type="entry name" value="RimP_N_sf"/>
</dbReference>
<dbReference type="NCBIfam" id="NF000934">
    <property type="entry name" value="PRK00092.3-1"/>
    <property type="match status" value="1"/>
</dbReference>
<dbReference type="PANTHER" id="PTHR33867">
    <property type="entry name" value="RIBOSOME MATURATION FACTOR RIMP"/>
    <property type="match status" value="1"/>
</dbReference>
<dbReference type="PANTHER" id="PTHR33867:SF1">
    <property type="entry name" value="RIBOSOME MATURATION FACTOR RIMP"/>
    <property type="match status" value="1"/>
</dbReference>
<dbReference type="Pfam" id="PF17384">
    <property type="entry name" value="DUF150_C"/>
    <property type="match status" value="1"/>
</dbReference>
<dbReference type="Pfam" id="PF02576">
    <property type="entry name" value="RimP_N"/>
    <property type="match status" value="1"/>
</dbReference>
<dbReference type="SUPFAM" id="SSF74942">
    <property type="entry name" value="YhbC-like, C-terminal domain"/>
    <property type="match status" value="1"/>
</dbReference>
<dbReference type="SUPFAM" id="SSF75420">
    <property type="entry name" value="YhbC-like, N-terminal domain"/>
    <property type="match status" value="1"/>
</dbReference>
<gene>
    <name evidence="1" type="primary">rimP</name>
    <name type="ordered locus">CKL_1427</name>
</gene>
<proteinExistence type="inferred from homology"/>
<comment type="function">
    <text evidence="1">Required for maturation of 30S ribosomal subunits.</text>
</comment>
<comment type="subcellular location">
    <subcellularLocation>
        <location evidence="1">Cytoplasm</location>
    </subcellularLocation>
</comment>
<comment type="similarity">
    <text evidence="1">Belongs to the RimP family.</text>
</comment>
<accession>A5N838</accession>
<keyword id="KW-0963">Cytoplasm</keyword>
<keyword id="KW-1185">Reference proteome</keyword>
<keyword id="KW-0690">Ribosome biogenesis</keyword>
<reference key="1">
    <citation type="journal article" date="2008" name="Proc. Natl. Acad. Sci. U.S.A.">
        <title>The genome of Clostridium kluyveri, a strict anaerobe with unique metabolic features.</title>
        <authorList>
            <person name="Seedorf H."/>
            <person name="Fricke W.F."/>
            <person name="Veith B."/>
            <person name="Brueggemann H."/>
            <person name="Liesegang H."/>
            <person name="Strittmatter A."/>
            <person name="Miethke M."/>
            <person name="Buckel W."/>
            <person name="Hinderberger J."/>
            <person name="Li F."/>
            <person name="Hagemeier C."/>
            <person name="Thauer R.K."/>
            <person name="Gottschalk G."/>
        </authorList>
    </citation>
    <scope>NUCLEOTIDE SEQUENCE [LARGE SCALE GENOMIC DNA]</scope>
    <source>
        <strain>ATCC 8527 / DSM 555 / NBRC 12016 / NCIMB 10680 / K1</strain>
    </source>
</reference>
<evidence type="ECO:0000255" key="1">
    <source>
        <dbReference type="HAMAP-Rule" id="MF_01077"/>
    </source>
</evidence>
<feature type="chain" id="PRO_1000084521" description="Ribosome maturation factor RimP">
    <location>
        <begin position="1"/>
        <end position="154"/>
    </location>
</feature>